<feature type="chain" id="PRO_1000083981" description="Undecaprenyl-diphosphatase">
    <location>
        <begin position="1"/>
        <end position="276"/>
    </location>
</feature>
<feature type="transmembrane region" description="Helical" evidence="1">
    <location>
        <begin position="1"/>
        <end position="21"/>
    </location>
</feature>
<feature type="transmembrane region" description="Helical" evidence="1">
    <location>
        <begin position="39"/>
        <end position="59"/>
    </location>
</feature>
<feature type="transmembrane region" description="Helical" evidence="1">
    <location>
        <begin position="84"/>
        <end position="104"/>
    </location>
</feature>
<feature type="transmembrane region" description="Helical" evidence="1">
    <location>
        <begin position="115"/>
        <end position="135"/>
    </location>
</feature>
<feature type="transmembrane region" description="Helical" evidence="1">
    <location>
        <begin position="159"/>
        <end position="179"/>
    </location>
</feature>
<feature type="transmembrane region" description="Helical" evidence="1">
    <location>
        <begin position="190"/>
        <end position="210"/>
    </location>
</feature>
<feature type="transmembrane region" description="Helical" evidence="1">
    <location>
        <begin position="222"/>
        <end position="242"/>
    </location>
</feature>
<feature type="transmembrane region" description="Helical" evidence="1">
    <location>
        <begin position="253"/>
        <end position="273"/>
    </location>
</feature>
<dbReference type="EC" id="3.6.1.27" evidence="1"/>
<dbReference type="EMBL" id="CP000656">
    <property type="protein sequence ID" value="ABP45520.1"/>
    <property type="molecule type" value="Genomic_DNA"/>
</dbReference>
<dbReference type="SMR" id="A4TB90"/>
<dbReference type="STRING" id="350054.Mflv_3043"/>
<dbReference type="KEGG" id="mgi:Mflv_3043"/>
<dbReference type="eggNOG" id="COG1968">
    <property type="taxonomic scope" value="Bacteria"/>
</dbReference>
<dbReference type="HOGENOM" id="CLU_060296_1_0_11"/>
<dbReference type="OrthoDB" id="9808289at2"/>
<dbReference type="GO" id="GO:0005886">
    <property type="term" value="C:plasma membrane"/>
    <property type="evidence" value="ECO:0007669"/>
    <property type="project" value="UniProtKB-SubCell"/>
</dbReference>
<dbReference type="GO" id="GO:0050380">
    <property type="term" value="F:undecaprenyl-diphosphatase activity"/>
    <property type="evidence" value="ECO:0007669"/>
    <property type="project" value="UniProtKB-UniRule"/>
</dbReference>
<dbReference type="GO" id="GO:0071555">
    <property type="term" value="P:cell wall organization"/>
    <property type="evidence" value="ECO:0007669"/>
    <property type="project" value="UniProtKB-KW"/>
</dbReference>
<dbReference type="GO" id="GO:0009252">
    <property type="term" value="P:peptidoglycan biosynthetic process"/>
    <property type="evidence" value="ECO:0007669"/>
    <property type="project" value="UniProtKB-KW"/>
</dbReference>
<dbReference type="GO" id="GO:0008360">
    <property type="term" value="P:regulation of cell shape"/>
    <property type="evidence" value="ECO:0007669"/>
    <property type="project" value="UniProtKB-KW"/>
</dbReference>
<dbReference type="GO" id="GO:0046677">
    <property type="term" value="P:response to antibiotic"/>
    <property type="evidence" value="ECO:0007669"/>
    <property type="project" value="UniProtKB-UniRule"/>
</dbReference>
<dbReference type="HAMAP" id="MF_01006">
    <property type="entry name" value="Undec_diphosphatase"/>
    <property type="match status" value="1"/>
</dbReference>
<dbReference type="InterPro" id="IPR003824">
    <property type="entry name" value="UppP"/>
</dbReference>
<dbReference type="NCBIfam" id="NF001392">
    <property type="entry name" value="PRK00281.2-1"/>
    <property type="match status" value="1"/>
</dbReference>
<dbReference type="NCBIfam" id="TIGR00753">
    <property type="entry name" value="undec_PP_bacA"/>
    <property type="match status" value="1"/>
</dbReference>
<dbReference type="PANTHER" id="PTHR30622">
    <property type="entry name" value="UNDECAPRENYL-DIPHOSPHATASE"/>
    <property type="match status" value="1"/>
</dbReference>
<dbReference type="PANTHER" id="PTHR30622:SF4">
    <property type="entry name" value="UNDECAPRENYL-DIPHOSPHATASE"/>
    <property type="match status" value="1"/>
</dbReference>
<dbReference type="Pfam" id="PF02673">
    <property type="entry name" value="BacA"/>
    <property type="match status" value="1"/>
</dbReference>
<gene>
    <name evidence="1" type="primary">uppP</name>
    <name type="ordered locus">Mflv_3043</name>
</gene>
<accession>A4TB90</accession>
<reference key="1">
    <citation type="submission" date="2007-04" db="EMBL/GenBank/DDBJ databases">
        <title>Complete sequence of chromosome of Mycobacterium gilvum PYR-GCK.</title>
        <authorList>
            <consortium name="US DOE Joint Genome Institute"/>
            <person name="Copeland A."/>
            <person name="Lucas S."/>
            <person name="Lapidus A."/>
            <person name="Barry K."/>
            <person name="Detter J.C."/>
            <person name="Glavina del Rio T."/>
            <person name="Hammon N."/>
            <person name="Israni S."/>
            <person name="Dalin E."/>
            <person name="Tice H."/>
            <person name="Pitluck S."/>
            <person name="Chain P."/>
            <person name="Malfatti S."/>
            <person name="Shin M."/>
            <person name="Vergez L."/>
            <person name="Schmutz J."/>
            <person name="Larimer F."/>
            <person name="Land M."/>
            <person name="Hauser L."/>
            <person name="Kyrpides N."/>
            <person name="Mikhailova N."/>
            <person name="Miller C."/>
            <person name="Richardson P."/>
        </authorList>
    </citation>
    <scope>NUCLEOTIDE SEQUENCE [LARGE SCALE GENOMIC DNA]</scope>
    <source>
        <strain>PYR-GCK</strain>
    </source>
</reference>
<organism>
    <name type="scientific">Mycolicibacterium gilvum (strain PYR-GCK)</name>
    <name type="common">Mycobacterium gilvum (strain PYR-GCK)</name>
    <dbReference type="NCBI Taxonomy" id="350054"/>
    <lineage>
        <taxon>Bacteria</taxon>
        <taxon>Bacillati</taxon>
        <taxon>Actinomycetota</taxon>
        <taxon>Actinomycetes</taxon>
        <taxon>Mycobacteriales</taxon>
        <taxon>Mycobacteriaceae</taxon>
        <taxon>Mycolicibacterium</taxon>
    </lineage>
</organism>
<protein>
    <recommendedName>
        <fullName evidence="1">Undecaprenyl-diphosphatase</fullName>
        <ecNumber evidence="1">3.6.1.27</ecNumber>
    </recommendedName>
    <alternativeName>
        <fullName evidence="1">Bacitracin resistance protein</fullName>
    </alternativeName>
    <alternativeName>
        <fullName evidence="1">Undecaprenyl pyrophosphate phosphatase</fullName>
    </alternativeName>
</protein>
<keyword id="KW-0046">Antibiotic resistance</keyword>
<keyword id="KW-1003">Cell membrane</keyword>
<keyword id="KW-0133">Cell shape</keyword>
<keyword id="KW-0961">Cell wall biogenesis/degradation</keyword>
<keyword id="KW-0378">Hydrolase</keyword>
<keyword id="KW-0472">Membrane</keyword>
<keyword id="KW-0573">Peptidoglycan synthesis</keyword>
<keyword id="KW-0812">Transmembrane</keyword>
<keyword id="KW-1133">Transmembrane helix</keyword>
<evidence type="ECO:0000255" key="1">
    <source>
        <dbReference type="HAMAP-Rule" id="MF_01006"/>
    </source>
</evidence>
<comment type="function">
    <text evidence="1">Catalyzes the dephosphorylation of undecaprenyl diphosphate (UPP). Confers resistance to bacitracin.</text>
</comment>
<comment type="catalytic activity">
    <reaction evidence="1">
        <text>di-trans,octa-cis-undecaprenyl diphosphate + H2O = di-trans,octa-cis-undecaprenyl phosphate + phosphate + H(+)</text>
        <dbReference type="Rhea" id="RHEA:28094"/>
        <dbReference type="ChEBI" id="CHEBI:15377"/>
        <dbReference type="ChEBI" id="CHEBI:15378"/>
        <dbReference type="ChEBI" id="CHEBI:43474"/>
        <dbReference type="ChEBI" id="CHEBI:58405"/>
        <dbReference type="ChEBI" id="CHEBI:60392"/>
        <dbReference type="EC" id="3.6.1.27"/>
    </reaction>
</comment>
<comment type="subcellular location">
    <subcellularLocation>
        <location evidence="1">Cell membrane</location>
        <topology evidence="1">Multi-pass membrane protein</topology>
    </subcellularLocation>
</comment>
<comment type="miscellaneous">
    <text>Bacitracin is thought to be involved in the inhibition of peptidoglycan synthesis by sequestering undecaprenyl diphosphate, thereby reducing the pool of lipid carrier available.</text>
</comment>
<comment type="similarity">
    <text evidence="1">Belongs to the UppP family.</text>
</comment>
<name>UPPP_MYCGI</name>
<sequence length="276" mass="29754">MSWLQVVVLSVLQGLTEFLPVSSSGHLAIASRVFFEDDAGASFTAVCQLGTEAAVLVYFARDIARILKAWFAGLFGSGERSPDYWLGWWVIIGTIPISVIGLLFKDEIRTGARNLWLVATAMIVFSFVIAAAEYAGRQTRRVEQLTWRDSVIVGFAQCLALVPGVSRSGATISAGLFLGMDRELAARFGFLLAIPAVFASGLFSLPDAFAPVGEGMSATGPQLLVSTVIAFVVGYAAVAWFLRFLVRHSMYWFVGYRIILGSVVLILLSTGVVAAI</sequence>
<proteinExistence type="inferred from homology"/>